<protein>
    <recommendedName>
        <fullName evidence="1">Ribonuclease HII</fullName>
        <shortName evidence="1">RNase HII</shortName>
        <ecNumber evidence="1">3.1.26.4</ecNumber>
    </recommendedName>
</protein>
<reference key="1">
    <citation type="submission" date="2008-02" db="EMBL/GenBank/DDBJ databases">
        <title>Complete sequence of Yersinia pseudotuberculosis YPIII.</title>
        <authorList>
            <consortium name="US DOE Joint Genome Institute"/>
            <person name="Copeland A."/>
            <person name="Lucas S."/>
            <person name="Lapidus A."/>
            <person name="Glavina del Rio T."/>
            <person name="Dalin E."/>
            <person name="Tice H."/>
            <person name="Bruce D."/>
            <person name="Goodwin L."/>
            <person name="Pitluck S."/>
            <person name="Munk A.C."/>
            <person name="Brettin T."/>
            <person name="Detter J.C."/>
            <person name="Han C."/>
            <person name="Tapia R."/>
            <person name="Schmutz J."/>
            <person name="Larimer F."/>
            <person name="Land M."/>
            <person name="Hauser L."/>
            <person name="Challacombe J.F."/>
            <person name="Green L."/>
            <person name="Lindler L.E."/>
            <person name="Nikolich M.P."/>
            <person name="Richardson P."/>
        </authorList>
    </citation>
    <scope>NUCLEOTIDE SEQUENCE [LARGE SCALE GENOMIC DNA]</scope>
    <source>
        <strain>YPIII</strain>
    </source>
</reference>
<name>RNH2_YERPY</name>
<proteinExistence type="inferred from homology"/>
<sequence>MSETFIYPQANLIAGVDEVGRGPLVGAVVTAAVILDPNRPIVGLADSKKLSEKRRLSLYDEITEKALSWSLGRAEPEEIDQLNILHAAMLAMQRAVSGLHIVPDYVLIDGNRCPKLQMPSLAVVKGDSRVAEISAASILAKVTRDREMTELDLLFPEYGFAQHKGYPTAFHLEKLAALGATVHHRRSFGPVKRVLGLV</sequence>
<organism>
    <name type="scientific">Yersinia pseudotuberculosis serotype O:3 (strain YPIII)</name>
    <dbReference type="NCBI Taxonomy" id="502800"/>
    <lineage>
        <taxon>Bacteria</taxon>
        <taxon>Pseudomonadati</taxon>
        <taxon>Pseudomonadota</taxon>
        <taxon>Gammaproteobacteria</taxon>
        <taxon>Enterobacterales</taxon>
        <taxon>Yersiniaceae</taxon>
        <taxon>Yersinia</taxon>
    </lineage>
</organism>
<evidence type="ECO:0000255" key="1">
    <source>
        <dbReference type="HAMAP-Rule" id="MF_00052"/>
    </source>
</evidence>
<evidence type="ECO:0000255" key="2">
    <source>
        <dbReference type="PROSITE-ProRule" id="PRU01319"/>
    </source>
</evidence>
<accession>B1JQH4</accession>
<dbReference type="EC" id="3.1.26.4" evidence="1"/>
<dbReference type="EMBL" id="CP000950">
    <property type="protein sequence ID" value="ACA67381.1"/>
    <property type="molecule type" value="Genomic_DNA"/>
</dbReference>
<dbReference type="RefSeq" id="WP_012303759.1">
    <property type="nucleotide sequence ID" value="NZ_CP009792.1"/>
</dbReference>
<dbReference type="SMR" id="B1JQH4"/>
<dbReference type="KEGG" id="ypy:YPK_1080"/>
<dbReference type="PATRIC" id="fig|502800.11.peg.1712"/>
<dbReference type="GO" id="GO:0005737">
    <property type="term" value="C:cytoplasm"/>
    <property type="evidence" value="ECO:0007669"/>
    <property type="project" value="UniProtKB-SubCell"/>
</dbReference>
<dbReference type="GO" id="GO:0032299">
    <property type="term" value="C:ribonuclease H2 complex"/>
    <property type="evidence" value="ECO:0007669"/>
    <property type="project" value="TreeGrafter"/>
</dbReference>
<dbReference type="GO" id="GO:0030145">
    <property type="term" value="F:manganese ion binding"/>
    <property type="evidence" value="ECO:0007669"/>
    <property type="project" value="UniProtKB-UniRule"/>
</dbReference>
<dbReference type="GO" id="GO:0003723">
    <property type="term" value="F:RNA binding"/>
    <property type="evidence" value="ECO:0007669"/>
    <property type="project" value="InterPro"/>
</dbReference>
<dbReference type="GO" id="GO:0004523">
    <property type="term" value="F:RNA-DNA hybrid ribonuclease activity"/>
    <property type="evidence" value="ECO:0007669"/>
    <property type="project" value="UniProtKB-UniRule"/>
</dbReference>
<dbReference type="GO" id="GO:0043137">
    <property type="term" value="P:DNA replication, removal of RNA primer"/>
    <property type="evidence" value="ECO:0007669"/>
    <property type="project" value="TreeGrafter"/>
</dbReference>
<dbReference type="GO" id="GO:0006298">
    <property type="term" value="P:mismatch repair"/>
    <property type="evidence" value="ECO:0007669"/>
    <property type="project" value="TreeGrafter"/>
</dbReference>
<dbReference type="CDD" id="cd07182">
    <property type="entry name" value="RNase_HII_bacteria_HII_like"/>
    <property type="match status" value="1"/>
</dbReference>
<dbReference type="FunFam" id="3.30.420.10:FF:000006">
    <property type="entry name" value="Ribonuclease HII"/>
    <property type="match status" value="1"/>
</dbReference>
<dbReference type="Gene3D" id="3.30.420.10">
    <property type="entry name" value="Ribonuclease H-like superfamily/Ribonuclease H"/>
    <property type="match status" value="1"/>
</dbReference>
<dbReference type="HAMAP" id="MF_00052_B">
    <property type="entry name" value="RNase_HII_B"/>
    <property type="match status" value="1"/>
</dbReference>
<dbReference type="InterPro" id="IPR022898">
    <property type="entry name" value="RNase_HII"/>
</dbReference>
<dbReference type="InterPro" id="IPR001352">
    <property type="entry name" value="RNase_HII/HIII"/>
</dbReference>
<dbReference type="InterPro" id="IPR024567">
    <property type="entry name" value="RNase_HII/HIII_dom"/>
</dbReference>
<dbReference type="InterPro" id="IPR012337">
    <property type="entry name" value="RNaseH-like_sf"/>
</dbReference>
<dbReference type="InterPro" id="IPR036397">
    <property type="entry name" value="RNaseH_sf"/>
</dbReference>
<dbReference type="NCBIfam" id="NF000594">
    <property type="entry name" value="PRK00015.1-1"/>
    <property type="match status" value="1"/>
</dbReference>
<dbReference type="NCBIfam" id="NF000595">
    <property type="entry name" value="PRK00015.1-3"/>
    <property type="match status" value="1"/>
</dbReference>
<dbReference type="NCBIfam" id="NF000596">
    <property type="entry name" value="PRK00015.1-4"/>
    <property type="match status" value="1"/>
</dbReference>
<dbReference type="PANTHER" id="PTHR10954">
    <property type="entry name" value="RIBONUCLEASE H2 SUBUNIT A"/>
    <property type="match status" value="1"/>
</dbReference>
<dbReference type="PANTHER" id="PTHR10954:SF18">
    <property type="entry name" value="RIBONUCLEASE HII"/>
    <property type="match status" value="1"/>
</dbReference>
<dbReference type="Pfam" id="PF01351">
    <property type="entry name" value="RNase_HII"/>
    <property type="match status" value="1"/>
</dbReference>
<dbReference type="SUPFAM" id="SSF53098">
    <property type="entry name" value="Ribonuclease H-like"/>
    <property type="match status" value="1"/>
</dbReference>
<dbReference type="PROSITE" id="PS51975">
    <property type="entry name" value="RNASE_H_2"/>
    <property type="match status" value="1"/>
</dbReference>
<comment type="function">
    <text evidence="1">Endonuclease that specifically degrades the RNA of RNA-DNA hybrids.</text>
</comment>
<comment type="catalytic activity">
    <reaction evidence="1">
        <text>Endonucleolytic cleavage to 5'-phosphomonoester.</text>
        <dbReference type="EC" id="3.1.26.4"/>
    </reaction>
</comment>
<comment type="cofactor">
    <cofactor evidence="1">
        <name>Mn(2+)</name>
        <dbReference type="ChEBI" id="CHEBI:29035"/>
    </cofactor>
    <cofactor evidence="1">
        <name>Mg(2+)</name>
        <dbReference type="ChEBI" id="CHEBI:18420"/>
    </cofactor>
    <text evidence="1">Manganese or magnesium. Binds 1 divalent metal ion per monomer in the absence of substrate. May bind a second metal ion after substrate binding.</text>
</comment>
<comment type="subcellular location">
    <subcellularLocation>
        <location evidence="1">Cytoplasm</location>
    </subcellularLocation>
</comment>
<comment type="similarity">
    <text evidence="1">Belongs to the RNase HII family.</text>
</comment>
<feature type="chain" id="PRO_1000091672" description="Ribonuclease HII">
    <location>
        <begin position="1"/>
        <end position="198"/>
    </location>
</feature>
<feature type="domain" description="RNase H type-2" evidence="2">
    <location>
        <begin position="11"/>
        <end position="198"/>
    </location>
</feature>
<feature type="binding site" evidence="1">
    <location>
        <position position="17"/>
    </location>
    <ligand>
        <name>a divalent metal cation</name>
        <dbReference type="ChEBI" id="CHEBI:60240"/>
    </ligand>
</feature>
<feature type="binding site" evidence="1">
    <location>
        <position position="18"/>
    </location>
    <ligand>
        <name>a divalent metal cation</name>
        <dbReference type="ChEBI" id="CHEBI:60240"/>
    </ligand>
</feature>
<feature type="binding site" evidence="1">
    <location>
        <position position="109"/>
    </location>
    <ligand>
        <name>a divalent metal cation</name>
        <dbReference type="ChEBI" id="CHEBI:60240"/>
    </ligand>
</feature>
<gene>
    <name evidence="1" type="primary">rnhB</name>
    <name type="ordered locus">YPK_1080</name>
</gene>
<keyword id="KW-0963">Cytoplasm</keyword>
<keyword id="KW-0255">Endonuclease</keyword>
<keyword id="KW-0378">Hydrolase</keyword>
<keyword id="KW-0464">Manganese</keyword>
<keyword id="KW-0479">Metal-binding</keyword>
<keyword id="KW-0540">Nuclease</keyword>